<reference key="1">
    <citation type="journal article" date="2004" name="Science">
        <title>The complete genome sequence of Propionibacterium acnes, a commensal of human skin.</title>
        <authorList>
            <person name="Brueggemann H."/>
            <person name="Henne A."/>
            <person name="Hoster F."/>
            <person name="Liesegang H."/>
            <person name="Wiezer A."/>
            <person name="Strittmatter A."/>
            <person name="Hujer S."/>
            <person name="Duerre P."/>
            <person name="Gottschalk G."/>
        </authorList>
    </citation>
    <scope>NUCLEOTIDE SEQUENCE [LARGE SCALE GENOMIC DNA]</scope>
    <source>
        <strain>DSM 16379 / KPA171202</strain>
    </source>
</reference>
<dbReference type="EMBL" id="AE017283">
    <property type="protein sequence ID" value="AAT83617.1"/>
    <property type="molecule type" value="Genomic_DNA"/>
</dbReference>
<dbReference type="RefSeq" id="WP_002514899.1">
    <property type="nucleotide sequence ID" value="NZ_CP025935.1"/>
</dbReference>
<dbReference type="SMR" id="Q6A6J6"/>
<dbReference type="EnsemblBacteria" id="AAT83617">
    <property type="protein sequence ID" value="AAT83617"/>
    <property type="gene ID" value="PPA1896"/>
</dbReference>
<dbReference type="KEGG" id="pac:PPA1896"/>
<dbReference type="eggNOG" id="COG2030">
    <property type="taxonomic scope" value="Bacteria"/>
</dbReference>
<dbReference type="HOGENOM" id="CLU_116276_0_0_11"/>
<dbReference type="Proteomes" id="UP000000603">
    <property type="component" value="Chromosome"/>
</dbReference>
<dbReference type="CDD" id="cd03441">
    <property type="entry name" value="R_hydratase_like"/>
    <property type="match status" value="1"/>
</dbReference>
<dbReference type="Gene3D" id="3.10.129.10">
    <property type="entry name" value="Hotdog Thioesterase"/>
    <property type="match status" value="1"/>
</dbReference>
<dbReference type="HAMAP" id="MF_00799">
    <property type="entry name" value="UPF0336"/>
    <property type="match status" value="1"/>
</dbReference>
<dbReference type="InterPro" id="IPR039569">
    <property type="entry name" value="FAS1-like_DH_region"/>
</dbReference>
<dbReference type="InterPro" id="IPR016709">
    <property type="entry name" value="HadA-like"/>
</dbReference>
<dbReference type="InterPro" id="IPR029069">
    <property type="entry name" value="HotDog_dom_sf"/>
</dbReference>
<dbReference type="Pfam" id="PF13452">
    <property type="entry name" value="FAS1_DH_region"/>
    <property type="match status" value="1"/>
</dbReference>
<dbReference type="PIRSF" id="PIRSF018072">
    <property type="entry name" value="UCP018072"/>
    <property type="match status" value="1"/>
</dbReference>
<dbReference type="SUPFAM" id="SSF54637">
    <property type="entry name" value="Thioesterase/thiol ester dehydrase-isomerase"/>
    <property type="match status" value="1"/>
</dbReference>
<organism>
    <name type="scientific">Cutibacterium acnes (strain DSM 16379 / KPA171202)</name>
    <name type="common">Propionibacterium acnes</name>
    <dbReference type="NCBI Taxonomy" id="267747"/>
    <lineage>
        <taxon>Bacteria</taxon>
        <taxon>Bacillati</taxon>
        <taxon>Actinomycetota</taxon>
        <taxon>Actinomycetes</taxon>
        <taxon>Propionibacteriales</taxon>
        <taxon>Propionibacteriaceae</taxon>
        <taxon>Cutibacterium</taxon>
    </lineage>
</organism>
<sequence>MSISSHDVGRTYPTTDPYLVTAEKIRELATALGDNAPAYRGDDPIAPPTFAMVLASRAWEALFDDEQLDLRLEHMIHTDQSFHWIRPLHEGDEVTAALTITSVRTRGNTDIIGINVSLDHVDGEHLGNATSTLWHTRPEGNA</sequence>
<proteinExistence type="inferred from homology"/>
<protein>
    <recommendedName>
        <fullName evidence="1">UPF0336 protein PPA1896</fullName>
    </recommendedName>
</protein>
<evidence type="ECO:0000255" key="1">
    <source>
        <dbReference type="HAMAP-Rule" id="MF_00799"/>
    </source>
</evidence>
<accession>Q6A6J6</accession>
<comment type="similarity">
    <text evidence="1">Belongs to the UPF0336 family.</text>
</comment>
<name>Y1896_CUTAK</name>
<gene>
    <name type="ordered locus">PPA1896</name>
</gene>
<feature type="chain" id="PRO_0000216145" description="UPF0336 protein PPA1896">
    <location>
        <begin position="1"/>
        <end position="142"/>
    </location>
</feature>